<feature type="signal peptide" evidence="1">
    <location>
        <begin position="1"/>
        <end position="24"/>
    </location>
</feature>
<feature type="chain" id="PRO_5004316823" description="Metal-independent carbonic anhydrase">
    <location>
        <begin position="25"/>
        <end position="205"/>
    </location>
</feature>
<feature type="binding site" evidence="2 6">
    <location>
        <position position="106"/>
    </location>
    <ligand>
        <name>hydrogencarbonate</name>
        <dbReference type="ChEBI" id="CHEBI:17544"/>
    </ligand>
</feature>
<feature type="binding site" evidence="2 6">
    <location>
        <position position="124"/>
    </location>
    <ligand>
        <name>hydrogencarbonate</name>
        <dbReference type="ChEBI" id="CHEBI:17544"/>
    </ligand>
</feature>
<feature type="mutagenesis site" description="Loss of activity." evidence="2">
    <original>T</original>
    <variation>A</variation>
    <location>
        <position position="106"/>
    </location>
</feature>
<feature type="mutagenesis site" description="Loss of activity." evidence="2">
    <original>Y</original>
    <variation>A</variation>
    <location>
        <position position="124"/>
    </location>
</feature>
<feature type="mutagenesis site" description="No change in activity." evidence="2">
    <original>K</original>
    <variation>A</variation>
    <location>
        <position position="180"/>
    </location>
</feature>
<feature type="mutagenesis site" description="Loss of activity." evidence="2">
    <original>H</original>
    <variation>A</variation>
    <location>
        <position position="197"/>
    </location>
</feature>
<feature type="mutagenesis site" description="Loss of activity." evidence="2">
    <original>S</original>
    <variation>A</variation>
    <location>
        <position position="199"/>
    </location>
</feature>
<feature type="helix" evidence="9">
    <location>
        <begin position="53"/>
        <end position="77"/>
    </location>
</feature>
<feature type="helix" evidence="9">
    <location>
        <begin position="79"/>
        <end position="93"/>
    </location>
</feature>
<feature type="helix" evidence="9">
    <location>
        <begin position="96"/>
        <end position="98"/>
    </location>
</feature>
<feature type="strand" evidence="9">
    <location>
        <begin position="102"/>
        <end position="104"/>
    </location>
</feature>
<feature type="helix" evidence="8">
    <location>
        <begin position="110"/>
        <end position="112"/>
    </location>
</feature>
<feature type="helix" evidence="9">
    <location>
        <begin position="118"/>
        <end position="126"/>
    </location>
</feature>
<feature type="helix" evidence="9">
    <location>
        <begin position="138"/>
        <end position="140"/>
    </location>
</feature>
<feature type="strand" evidence="9">
    <location>
        <begin position="143"/>
        <end position="155"/>
    </location>
</feature>
<feature type="strand" evidence="9">
    <location>
        <begin position="157"/>
        <end position="170"/>
    </location>
</feature>
<feature type="strand" evidence="9">
    <location>
        <begin position="175"/>
        <end position="186"/>
    </location>
</feature>
<feature type="strand" evidence="9">
    <location>
        <begin position="192"/>
        <end position="200"/>
    </location>
</feature>
<proteinExistence type="evidence at protein level"/>
<evidence type="ECO:0000255" key="1"/>
<evidence type="ECO:0000269" key="2">
    <source>
    </source>
</evidence>
<evidence type="ECO:0000303" key="3">
    <source>
    </source>
</evidence>
<evidence type="ECO:0000305" key="4">
    <source>
    </source>
</evidence>
<evidence type="ECO:0000312" key="5">
    <source>
        <dbReference type="EMBL" id="BAB74608.1"/>
    </source>
</evidence>
<evidence type="ECO:0007744" key="6">
    <source>
        <dbReference type="PDB" id="7C5V"/>
    </source>
</evidence>
<evidence type="ECO:0007744" key="7">
    <source>
        <dbReference type="PDB" id="7C5W"/>
    </source>
</evidence>
<evidence type="ECO:0007829" key="8">
    <source>
        <dbReference type="PDB" id="7C5V"/>
    </source>
</evidence>
<evidence type="ECO:0007829" key="9">
    <source>
        <dbReference type="PDB" id="7C5W"/>
    </source>
</evidence>
<reference key="1">
    <citation type="journal article" date="2001" name="DNA Res.">
        <title>Complete genomic sequence of the filamentous nitrogen-fixing cyanobacterium Anabaena sp. strain PCC 7120.</title>
        <authorList>
            <person name="Kaneko T."/>
            <person name="Nakamura Y."/>
            <person name="Wolk C.P."/>
            <person name="Kuritz T."/>
            <person name="Sasamoto S."/>
            <person name="Watanabe A."/>
            <person name="Iriguchi M."/>
            <person name="Ishikawa A."/>
            <person name="Kawashima K."/>
            <person name="Kimura T."/>
            <person name="Kishida Y."/>
            <person name="Kohara M."/>
            <person name="Matsumoto M."/>
            <person name="Matsuno A."/>
            <person name="Muraki A."/>
            <person name="Nakazaki N."/>
            <person name="Shimpo S."/>
            <person name="Sugimoto M."/>
            <person name="Takazawa M."/>
            <person name="Yamada M."/>
            <person name="Yasuda M."/>
            <person name="Tabata S."/>
        </authorList>
    </citation>
    <scope>NUCLEOTIDE SEQUENCE [LARGE SCALE GENOMIC DNA]</scope>
    <source>
        <strain>PCC 7120 / SAG 25.82 / UTEX 2576</strain>
    </source>
</reference>
<reference evidence="6 7" key="2">
    <citation type="journal article" date="2021" name="BMC Biol.">
        <title>Characterization of a novel type of carbonic anhydrase that acts without metal cofactors.</title>
        <authorList>
            <person name="Hirakawa Y."/>
            <person name="Senda M."/>
            <person name="Fukuda K."/>
            <person name="Yu H.Y."/>
            <person name="Ishida M."/>
            <person name="Taira M."/>
            <person name="Kinbara K."/>
            <person name="Senda T."/>
        </authorList>
    </citation>
    <scope>X-RAY CRYSTALLOGRAPHY (2.30 ANGSTROMS) OF 31-205 IN COMPLEXES WITH BICARBONATE AND IODIDE</scope>
    <scope>FUNCTION</scope>
    <scope>CATALYTIC ACTIVITY</scope>
    <scope>COFACTOR</scope>
    <scope>ACTIVITY REGULATION</scope>
    <scope>SUBUNIT</scope>
    <scope>MUTAGENESIS OF THR-106; TYR-124; LYS-180; HIS-197 AND SER-199</scope>
    <source>
        <strain>PCC 7120 / SAG 25.82 / UTEX 2576</strain>
    </source>
</reference>
<comment type="function">
    <text evidence="2">Catalyzes the hydration of carbon dioxide (CO2) to bicarbonate (HCO3(-)) (PubMed:34006275). Has only very low bicarbonate dehydration activity (PubMed:34006275). May function even in metal-poor environments (PubMed:34006275).</text>
</comment>
<comment type="catalytic activity">
    <reaction evidence="2">
        <text>hydrogencarbonate + H(+) = CO2 + H2O</text>
        <dbReference type="Rhea" id="RHEA:10748"/>
        <dbReference type="ChEBI" id="CHEBI:15377"/>
        <dbReference type="ChEBI" id="CHEBI:15378"/>
        <dbReference type="ChEBI" id="CHEBI:16526"/>
        <dbReference type="ChEBI" id="CHEBI:17544"/>
        <dbReference type="EC" id="4.2.1.1"/>
    </reaction>
    <physiologicalReaction direction="right-to-left" evidence="2">
        <dbReference type="Rhea" id="RHEA:10750"/>
    </physiologicalReaction>
</comment>
<comment type="cofactor">
    <text evidence="2">Does not require a metal cofactor.</text>
</comment>
<comment type="activity regulation">
    <text evidence="2">Activity is not affected by EDTA or 2,6-pyridinedicarboxylic acid (PDA) (PubMed:34006275). Activity is not affected by addition of most divalent metal ions, except zinc ions which decrease the activity (PubMed:34006275). Inhibited by the iodide ion (PubMed:34006275).</text>
</comment>
<comment type="subunit">
    <text evidence="2">Homotetramer; dimer of dimers.</text>
</comment>
<comment type="similarity">
    <text evidence="4">Belongs to the iota-class carbonic anhydrase family.</text>
</comment>
<accession>Q8YT18</accession>
<name>MICAH_NOSS1</name>
<dbReference type="EC" id="4.2.1.1" evidence="2"/>
<dbReference type="EMBL" id="BA000019">
    <property type="protein sequence ID" value="BAB74608.1"/>
    <property type="molecule type" value="Genomic_DNA"/>
</dbReference>
<dbReference type="PIR" id="AF2169">
    <property type="entry name" value="AF2169"/>
</dbReference>
<dbReference type="RefSeq" id="WP_010997060.1">
    <property type="nucleotide sequence ID" value="NZ_RSCN01000003.1"/>
</dbReference>
<dbReference type="PDB" id="7C5V">
    <property type="method" value="X-ray"/>
    <property type="resolution" value="2.65 A"/>
    <property type="chains" value="A/B=31-205"/>
</dbReference>
<dbReference type="PDB" id="7C5W">
    <property type="method" value="X-ray"/>
    <property type="resolution" value="2.30 A"/>
    <property type="chains" value="A/B=31-205"/>
</dbReference>
<dbReference type="PDBsum" id="7C5V"/>
<dbReference type="PDBsum" id="7C5W"/>
<dbReference type="SMR" id="Q8YT18"/>
<dbReference type="KEGG" id="ana:all2909"/>
<dbReference type="eggNOG" id="COG4337">
    <property type="taxonomic scope" value="Bacteria"/>
</dbReference>
<dbReference type="Proteomes" id="UP000002483">
    <property type="component" value="Chromosome"/>
</dbReference>
<dbReference type="GO" id="GO:0016829">
    <property type="term" value="F:lyase activity"/>
    <property type="evidence" value="ECO:0007669"/>
    <property type="project" value="UniProtKB-KW"/>
</dbReference>
<dbReference type="Gene3D" id="3.10.450.50">
    <property type="match status" value="1"/>
</dbReference>
<dbReference type="InterPro" id="IPR016878">
    <property type="entry name" value="MICAH-like"/>
</dbReference>
<dbReference type="InterPro" id="IPR032710">
    <property type="entry name" value="NTF2-like_dom_sf"/>
</dbReference>
<dbReference type="PIRSF" id="PIRSF028288">
    <property type="entry name" value="UCP028288"/>
    <property type="match status" value="1"/>
</dbReference>
<dbReference type="SUPFAM" id="SSF54427">
    <property type="entry name" value="NTF2-like"/>
    <property type="match status" value="1"/>
</dbReference>
<protein>
    <recommendedName>
        <fullName evidence="3">Metal-independent carbonic anhydrase</fullName>
        <shortName evidence="3">Metal-independent CA</shortName>
        <ecNumber evidence="2">4.2.1.1</ecNumber>
    </recommendedName>
</protein>
<keyword id="KW-0002">3D-structure</keyword>
<keyword id="KW-0456">Lyase</keyword>
<keyword id="KW-1185">Reference proteome</keyword>
<keyword id="KW-0732">Signal</keyword>
<sequence length="205" mass="22111">MNLFKPRILVLFAATALISGIAIVAQTSVADSGDKITATSSLKTPIVNRAITESEVLAAQKAWGEALVAISTTYDAKGKASAKALAEKVIDDAYGYQFGPVLFKPTLAISPRTFRTTRAGALAYFVGDDKAFPEDKGFALSSWRKVEIKNAAIFITGNTATTMGNVIITDKQGKATTVDKTWQFLKDDHGKLRIITHHSSLPYEQ</sequence>
<gene>
    <name evidence="5" type="ordered locus">all2909</name>
</gene>
<organism>
    <name type="scientific">Nostoc sp. (strain PCC 7120 / SAG 25.82 / UTEX 2576)</name>
    <dbReference type="NCBI Taxonomy" id="103690"/>
    <lineage>
        <taxon>Bacteria</taxon>
        <taxon>Bacillati</taxon>
        <taxon>Cyanobacteriota</taxon>
        <taxon>Cyanophyceae</taxon>
        <taxon>Nostocales</taxon>
        <taxon>Nostocaceae</taxon>
        <taxon>Nostoc</taxon>
    </lineage>
</organism>